<dbReference type="EC" id="2.5.1.18" evidence="4"/>
<dbReference type="EC" id="1.8.5.1" evidence="4"/>
<dbReference type="EC" id="1.20.4.2" evidence="4"/>
<dbReference type="EMBL" id="FO080706">
    <property type="protein sequence ID" value="CCD66006.1"/>
    <property type="molecule type" value="Genomic_DNA"/>
</dbReference>
<dbReference type="PIR" id="S44768">
    <property type="entry name" value="S44768"/>
</dbReference>
<dbReference type="RefSeq" id="NP_498728.1">
    <property type="nucleotide sequence ID" value="NM_066327.3"/>
</dbReference>
<dbReference type="SMR" id="P34345"/>
<dbReference type="BioGRID" id="47837">
    <property type="interactions" value="2"/>
</dbReference>
<dbReference type="DIP" id="DIP-24588N"/>
<dbReference type="FunCoup" id="P34345">
    <property type="interactions" value="466"/>
</dbReference>
<dbReference type="STRING" id="6239.C29E4.7.1"/>
<dbReference type="PaxDb" id="6239-C29E4.7"/>
<dbReference type="PeptideAtlas" id="P34345"/>
<dbReference type="EnsemblMetazoa" id="C29E4.7.1">
    <property type="protein sequence ID" value="C29E4.7.1"/>
    <property type="gene ID" value="WBGene00016204"/>
</dbReference>
<dbReference type="GeneID" id="183000"/>
<dbReference type="KEGG" id="cel:CELE_C29E4.7"/>
<dbReference type="AGR" id="WB:WBGene00016204"/>
<dbReference type="CTD" id="183000"/>
<dbReference type="WormBase" id="C29E4.7">
    <property type="protein sequence ID" value="CE00089"/>
    <property type="gene ID" value="WBGene00016204"/>
    <property type="gene designation" value="gsto-1"/>
</dbReference>
<dbReference type="eggNOG" id="KOG0406">
    <property type="taxonomic scope" value="Eukaryota"/>
</dbReference>
<dbReference type="HOGENOM" id="CLU_011226_9_2_1"/>
<dbReference type="InParanoid" id="P34345"/>
<dbReference type="OMA" id="WYTDYSP"/>
<dbReference type="OrthoDB" id="4951845at2759"/>
<dbReference type="PhylomeDB" id="P34345"/>
<dbReference type="Reactome" id="R-CEL-156581">
    <property type="pathway name" value="Methylation"/>
</dbReference>
<dbReference type="Reactome" id="R-CEL-156590">
    <property type="pathway name" value="Glutathione conjugation"/>
</dbReference>
<dbReference type="Reactome" id="R-CEL-196836">
    <property type="pathway name" value="Vitamin C (ascorbate) metabolism"/>
</dbReference>
<dbReference type="SABIO-RK" id="P34345"/>
<dbReference type="PRO" id="PR:P34345"/>
<dbReference type="Proteomes" id="UP000001940">
    <property type="component" value="Chromosome III"/>
</dbReference>
<dbReference type="Bgee" id="WBGene00016204">
    <property type="expression patterns" value="Expressed in larva and 3 other cell types or tissues"/>
</dbReference>
<dbReference type="GO" id="GO:0005737">
    <property type="term" value="C:cytoplasm"/>
    <property type="evidence" value="ECO:0000318"/>
    <property type="project" value="GO_Central"/>
</dbReference>
<dbReference type="GO" id="GO:0045174">
    <property type="term" value="F:glutathione dehydrogenase (ascorbate) activity"/>
    <property type="evidence" value="ECO:0000314"/>
    <property type="project" value="UniProtKB"/>
</dbReference>
<dbReference type="GO" id="GO:0004364">
    <property type="term" value="F:glutathione transferase activity"/>
    <property type="evidence" value="ECO:0000314"/>
    <property type="project" value="UniProtKB"/>
</dbReference>
<dbReference type="GO" id="GO:0050610">
    <property type="term" value="F:methylarsonate reductase activity"/>
    <property type="evidence" value="ECO:0007669"/>
    <property type="project" value="UniProtKB-EC"/>
</dbReference>
<dbReference type="GO" id="GO:0061687">
    <property type="term" value="P:detoxification of inorganic compound"/>
    <property type="evidence" value="ECO:0000314"/>
    <property type="project" value="UniProtKB"/>
</dbReference>
<dbReference type="GO" id="GO:0006749">
    <property type="term" value="P:glutathione metabolic process"/>
    <property type="evidence" value="ECO:0000318"/>
    <property type="project" value="GO_Central"/>
</dbReference>
<dbReference type="GO" id="GO:0006979">
    <property type="term" value="P:response to oxidative stress"/>
    <property type="evidence" value="ECO:0000314"/>
    <property type="project" value="UniProtKB"/>
</dbReference>
<dbReference type="GO" id="GO:0000303">
    <property type="term" value="P:response to superoxide"/>
    <property type="evidence" value="ECO:0000315"/>
    <property type="project" value="WormBase"/>
</dbReference>
<dbReference type="CDD" id="cd03184">
    <property type="entry name" value="GST_C_Omega"/>
    <property type="match status" value="1"/>
</dbReference>
<dbReference type="CDD" id="cd03055">
    <property type="entry name" value="GST_N_Omega"/>
    <property type="match status" value="1"/>
</dbReference>
<dbReference type="FunFam" id="1.20.1050.10:FF:000009">
    <property type="entry name" value="Glutathione S-transferase omega-1"/>
    <property type="match status" value="1"/>
</dbReference>
<dbReference type="FunFam" id="3.40.30.10:FF:000123">
    <property type="entry name" value="Glutathione transferase o1"/>
    <property type="match status" value="1"/>
</dbReference>
<dbReference type="Gene3D" id="1.20.1050.10">
    <property type="match status" value="1"/>
</dbReference>
<dbReference type="Gene3D" id="3.40.30.10">
    <property type="entry name" value="Glutaredoxin"/>
    <property type="match status" value="1"/>
</dbReference>
<dbReference type="InterPro" id="IPR010987">
    <property type="entry name" value="Glutathione-S-Trfase_C-like"/>
</dbReference>
<dbReference type="InterPro" id="IPR036282">
    <property type="entry name" value="Glutathione-S-Trfase_C_sf"/>
</dbReference>
<dbReference type="InterPro" id="IPR040079">
    <property type="entry name" value="Glutathione_S-Trfase"/>
</dbReference>
<dbReference type="InterPro" id="IPR004045">
    <property type="entry name" value="Glutathione_S-Trfase_N"/>
</dbReference>
<dbReference type="InterPro" id="IPR004046">
    <property type="entry name" value="GST_C"/>
</dbReference>
<dbReference type="InterPro" id="IPR005442">
    <property type="entry name" value="GST_omega"/>
</dbReference>
<dbReference type="InterPro" id="IPR050983">
    <property type="entry name" value="GST_Omega/HSP26"/>
</dbReference>
<dbReference type="InterPro" id="IPR036249">
    <property type="entry name" value="Thioredoxin-like_sf"/>
</dbReference>
<dbReference type="PANTHER" id="PTHR43968">
    <property type="match status" value="1"/>
</dbReference>
<dbReference type="PANTHER" id="PTHR43968:SF6">
    <property type="entry name" value="GLUTATHIONE S-TRANSFERASE OMEGA"/>
    <property type="match status" value="1"/>
</dbReference>
<dbReference type="Pfam" id="PF00043">
    <property type="entry name" value="GST_C"/>
    <property type="match status" value="1"/>
</dbReference>
<dbReference type="Pfam" id="PF02798">
    <property type="entry name" value="GST_N"/>
    <property type="match status" value="1"/>
</dbReference>
<dbReference type="PRINTS" id="PR01625">
    <property type="entry name" value="GSTRNSFRASEO"/>
</dbReference>
<dbReference type="SFLD" id="SFLDS00019">
    <property type="entry name" value="Glutathione_Transferase_(cytos"/>
    <property type="match status" value="1"/>
</dbReference>
<dbReference type="SFLD" id="SFLDG00358">
    <property type="entry name" value="Main_(cytGST)"/>
    <property type="match status" value="1"/>
</dbReference>
<dbReference type="SUPFAM" id="SSF47616">
    <property type="entry name" value="GST C-terminal domain-like"/>
    <property type="match status" value="1"/>
</dbReference>
<dbReference type="SUPFAM" id="SSF52833">
    <property type="entry name" value="Thioredoxin-like"/>
    <property type="match status" value="1"/>
</dbReference>
<dbReference type="PROSITE" id="PS50405">
    <property type="entry name" value="GST_CTER"/>
    <property type="match status" value="1"/>
</dbReference>
<dbReference type="PROSITE" id="PS50404">
    <property type="entry name" value="GST_NTER"/>
    <property type="match status" value="1"/>
</dbReference>
<name>GSTO1_CAEEL</name>
<accession>P34345</accession>
<feature type="chain" id="PRO_0000185889" description="Glutathione transferase omega-1">
    <location>
        <begin position="1"/>
        <end position="250"/>
    </location>
</feature>
<feature type="domain" description="GST N-terminal">
    <location>
        <begin position="21"/>
        <end position="101"/>
    </location>
</feature>
<feature type="domain" description="GST C-terminal">
    <location>
        <begin position="106"/>
        <end position="234"/>
    </location>
</feature>
<feature type="active site" description="Nucleophile" evidence="2">
    <location>
        <position position="33"/>
    </location>
</feature>
<feature type="binding site" evidence="3">
    <location>
        <position position="60"/>
    </location>
    <ligand>
        <name>glutathione</name>
        <dbReference type="ChEBI" id="CHEBI:57925"/>
    </ligand>
</feature>
<feature type="binding site" evidence="3">
    <location>
        <begin position="85"/>
        <end position="86"/>
    </location>
    <ligand>
        <name>glutathione</name>
        <dbReference type="ChEBI" id="CHEBI:57925"/>
    </ligand>
</feature>
<feature type="mutagenesis site" description="Increased sensitivity to oxidative stress when exposed to cumene hydroperoxide." evidence="4">
    <original>C</original>
    <variation>A</variation>
    <location>
        <position position="33"/>
    </location>
</feature>
<organism>
    <name type="scientific">Caenorhabditis elegans</name>
    <dbReference type="NCBI Taxonomy" id="6239"/>
    <lineage>
        <taxon>Eukaryota</taxon>
        <taxon>Metazoa</taxon>
        <taxon>Ecdysozoa</taxon>
        <taxon>Nematoda</taxon>
        <taxon>Chromadorea</taxon>
        <taxon>Rhabditida</taxon>
        <taxon>Rhabditina</taxon>
        <taxon>Rhabditomorpha</taxon>
        <taxon>Rhabditoidea</taxon>
        <taxon>Rhabditidae</taxon>
        <taxon>Peloderinae</taxon>
        <taxon>Caenorhabditis</taxon>
    </lineage>
</organism>
<protein>
    <recommendedName>
        <fullName>Glutathione transferase omega-1</fullName>
        <ecNumber evidence="4">2.5.1.18</ecNumber>
    </recommendedName>
    <alternativeName>
        <fullName>Glutathione-dependent dehydroascorbate reductase</fullName>
        <ecNumber evidence="4">1.8.5.1</ecNumber>
    </alternativeName>
    <alternativeName>
        <fullName>Monomethylarsonic acid reductase</fullName>
        <shortName>MMA(V) reductase</shortName>
        <ecNumber evidence="4">1.20.4.2</ecNumber>
    </alternativeName>
</protein>
<proteinExistence type="evidence at protein level"/>
<evidence type="ECO:0000250" key="1"/>
<evidence type="ECO:0000250" key="2">
    <source>
        <dbReference type="UniProtKB" id="P78417"/>
    </source>
</evidence>
<evidence type="ECO:0000250" key="3">
    <source>
        <dbReference type="UniProtKB" id="Q9H4Y5"/>
    </source>
</evidence>
<evidence type="ECO:0000269" key="4">
    <source>
    </source>
</evidence>
<evidence type="ECO:0000305" key="5"/>
<reference key="1">
    <citation type="journal article" date="2008" name="FASEB J.">
        <title>Oxidative stress in Caenorhabditis elegans: protective effects of the Omega class glutathione transferase (GSTO-1).</title>
        <authorList>
            <person name="Burmeister C."/>
            <person name="Luersen K."/>
            <person name="Heinick A."/>
            <person name="Hussein A."/>
            <person name="Domagalski M."/>
            <person name="Walter R.D."/>
            <person name="Liebau E."/>
        </authorList>
    </citation>
    <scope>NUCLEOTIDE SEQUENCE [MRNA]</scope>
    <scope>FUNCTION</scope>
    <scope>CATALYTIC ACTIVITY</scope>
    <scope>BIOPHYSICOCHEMICAL PROPERTIES</scope>
    <scope>TISSUE SPECIFICITY</scope>
    <scope>DEVELOPMENTAL STAGE</scope>
    <scope>DISRUPTION PHENOTYPE</scope>
    <scope>MUTAGENESIS OF CYS-33</scope>
</reference>
<reference key="2">
    <citation type="journal article" date="1994" name="Nature">
        <title>2.2 Mb of contiguous nucleotide sequence from chromosome III of C. elegans.</title>
        <authorList>
            <person name="Wilson R."/>
            <person name="Ainscough R."/>
            <person name="Anderson K."/>
            <person name="Baynes C."/>
            <person name="Berks M."/>
            <person name="Bonfield J."/>
            <person name="Burton J."/>
            <person name="Connell M."/>
            <person name="Copsey T."/>
            <person name="Cooper J."/>
            <person name="Coulson A."/>
            <person name="Craxton M."/>
            <person name="Dear S."/>
            <person name="Du Z."/>
            <person name="Durbin R."/>
            <person name="Favello A."/>
            <person name="Fraser A."/>
            <person name="Fulton L."/>
            <person name="Gardner A."/>
            <person name="Green P."/>
            <person name="Hawkins T."/>
            <person name="Hillier L."/>
            <person name="Jier M."/>
            <person name="Johnston L."/>
            <person name="Jones M."/>
            <person name="Kershaw J."/>
            <person name="Kirsten J."/>
            <person name="Laisster N."/>
            <person name="Latreille P."/>
            <person name="Lightning J."/>
            <person name="Lloyd C."/>
            <person name="Mortimore B."/>
            <person name="O'Callaghan M."/>
            <person name="Parsons J."/>
            <person name="Percy C."/>
            <person name="Rifken L."/>
            <person name="Roopra A."/>
            <person name="Saunders D."/>
            <person name="Shownkeen R."/>
            <person name="Sims M."/>
            <person name="Smaldon N."/>
            <person name="Smith A."/>
            <person name="Smith M."/>
            <person name="Sonnhammer E."/>
            <person name="Staden R."/>
            <person name="Sulston J."/>
            <person name="Thierry-Mieg J."/>
            <person name="Thomas K."/>
            <person name="Vaudin M."/>
            <person name="Vaughan K."/>
            <person name="Waterston R."/>
            <person name="Watson A."/>
            <person name="Weinstock L."/>
            <person name="Wilkinson-Sproat J."/>
            <person name="Wohldman P."/>
        </authorList>
    </citation>
    <scope>NUCLEOTIDE SEQUENCE [LARGE SCALE GENOMIC DNA]</scope>
    <source>
        <strain>Bristol N2</strain>
    </source>
</reference>
<reference key="3">
    <citation type="journal article" date="1998" name="Science">
        <title>Genome sequence of the nematode C. elegans: a platform for investigating biology.</title>
        <authorList>
            <consortium name="The C. elegans sequencing consortium"/>
        </authorList>
    </citation>
    <scope>NUCLEOTIDE SEQUENCE [LARGE SCALE GENOMIC DNA]</scope>
    <source>
        <strain>Bristol N2</strain>
    </source>
</reference>
<keyword id="KW-0963">Cytoplasm</keyword>
<keyword id="KW-0560">Oxidoreductase</keyword>
<keyword id="KW-1185">Reference proteome</keyword>
<keyword id="KW-0808">Transferase</keyword>
<gene>
    <name type="primary">gsto-1</name>
    <name type="ORF">C29E4.7</name>
</gene>
<sequence>MVLTGVTSKAIRKGDAEPPLSKGSFRVYNMRFCPWAERAMLYVAAKGIEAEVVNLNVTDKLEWYWTKHYQGKAPAVEHNGKVVIESGFIPEYLDDAFPETRILPTDPYEKVQQKLLADRLTAVAHAVPLLFAVMRDRTLKDEKQRKVFEVLKQAENLLANDFYAGSQPGYPDYLSFPFFEKIWWSASLDGVVDLPTIEFPGEEEYPKLTKWFQKMISSDVVQSVTQSLEHGAAFMNAYATHQELNYDLGL</sequence>
<comment type="function">
    <text evidence="2 4">Exhibits glutathione-dependent thiol transferase activity (By similarity). Has dehydroascorbate reductase activity and may contribute to the recycling of ascorbic acid (By similarity). Participates in the biotransformation of inorganic arsenic and reduces monomethylarsonic acid (MMA) (By similarity). Protects against environmental stress and oxidative stress (PubMed:17901115).</text>
</comment>
<comment type="catalytic activity">
    <reaction evidence="2">
        <text>RX + glutathione = an S-substituted glutathione + a halide anion + H(+)</text>
        <dbReference type="Rhea" id="RHEA:16437"/>
        <dbReference type="ChEBI" id="CHEBI:15378"/>
        <dbReference type="ChEBI" id="CHEBI:16042"/>
        <dbReference type="ChEBI" id="CHEBI:17792"/>
        <dbReference type="ChEBI" id="CHEBI:57925"/>
        <dbReference type="ChEBI" id="CHEBI:90779"/>
        <dbReference type="EC" id="2.5.1.18"/>
    </reaction>
</comment>
<comment type="catalytic activity">
    <reaction evidence="4">
        <text>L-dehydroascorbate + 2 glutathione = glutathione disulfide + L-ascorbate</text>
        <dbReference type="Rhea" id="RHEA:24424"/>
        <dbReference type="ChEBI" id="CHEBI:38290"/>
        <dbReference type="ChEBI" id="CHEBI:57925"/>
        <dbReference type="ChEBI" id="CHEBI:58297"/>
        <dbReference type="ChEBI" id="CHEBI:58539"/>
        <dbReference type="EC" id="1.8.5.1"/>
    </reaction>
</comment>
<comment type="catalytic activity">
    <reaction evidence="4">
        <text>methylarsonate + 2 glutathione + H(+) = methylarsonous acid + glutathione disulfide + H2O</text>
        <dbReference type="Rhea" id="RHEA:15969"/>
        <dbReference type="ChEBI" id="CHEBI:15377"/>
        <dbReference type="ChEBI" id="CHEBI:15378"/>
        <dbReference type="ChEBI" id="CHEBI:17826"/>
        <dbReference type="ChEBI" id="CHEBI:33409"/>
        <dbReference type="ChEBI" id="CHEBI:57925"/>
        <dbReference type="ChEBI" id="CHEBI:58297"/>
        <dbReference type="EC" id="1.20.4.2"/>
    </reaction>
</comment>
<comment type="biophysicochemical properties">
    <kinetics>
        <KM evidence="4">51.52 uM for 1-chloro-2,4-dintrobenzene</KM>
        <KM evidence="4">184.1 uM for dehydroascorbate</KM>
        <KM evidence="4">70.77 uM for 2-hydroxyethyl disulfide</KM>
        <Vmax evidence="4">106.0 nmol/min/mg enzyme towards 1-chloro-2,4-dintrobenzene</Vmax>
        <Vmax evidence="4">32.0 nmol/min/mg enzyme towards cumene hydroperoxide</Vmax>
        <Vmax evidence="4">186.0 nmol/min/mg enzyme towards dehydroascorbate</Vmax>
        <Vmax evidence="4">192.0 nmol/min/mg enzyme towards 2-hydroxyethyl disulfide</Vmax>
    </kinetics>
</comment>
<comment type="subunit">
    <text evidence="1">Homodimer.</text>
</comment>
<comment type="subcellular location">
    <subcellularLocation>
        <location evidence="1">Cytoplasm</location>
    </subcellularLocation>
</comment>
<comment type="tissue specificity">
    <text evidence="4">Expressed in the intestinal cells.</text>
</comment>
<comment type="developmental stage">
    <text evidence="4">Expressed in late embryos, during the L1 to L4 stages of larval development and in adult hermaphrodites.</text>
</comment>
<comment type="disruption phenotype">
    <text evidence="4">RNAi-mediated knockdown results in increased sensitivity and reduced survival in response to oxidative stress inducers cumene hydroperoxide, jugalone, paraquat and arsenite, and to heat shock treatment.</text>
</comment>
<comment type="similarity">
    <text evidence="5">Belongs to the GST superfamily. Omega family.</text>
</comment>